<reference key="1">
    <citation type="submission" date="2005-08" db="EMBL/GenBank/DDBJ databases">
        <title>Complete sequence of Pelodictyon luteolum DSM 273.</title>
        <authorList>
            <consortium name="US DOE Joint Genome Institute"/>
            <person name="Copeland A."/>
            <person name="Lucas S."/>
            <person name="Lapidus A."/>
            <person name="Barry K."/>
            <person name="Detter J.C."/>
            <person name="Glavina T."/>
            <person name="Hammon N."/>
            <person name="Israni S."/>
            <person name="Pitluck S."/>
            <person name="Bryant D."/>
            <person name="Schmutz J."/>
            <person name="Larimer F."/>
            <person name="Land M."/>
            <person name="Kyrpides N."/>
            <person name="Ivanova N."/>
            <person name="Richardson P."/>
        </authorList>
    </citation>
    <scope>NUCLEOTIDE SEQUENCE [LARGE SCALE GENOMIC DNA]</scope>
    <source>
        <strain>DSM 273 / BCRC 81028 / 2530</strain>
    </source>
</reference>
<name>HEM3_CHLL3</name>
<organism>
    <name type="scientific">Chlorobium luteolum (strain DSM 273 / BCRC 81028 / 2530)</name>
    <name type="common">Pelodictyon luteolum</name>
    <dbReference type="NCBI Taxonomy" id="319225"/>
    <lineage>
        <taxon>Bacteria</taxon>
        <taxon>Pseudomonadati</taxon>
        <taxon>Chlorobiota</taxon>
        <taxon>Chlorobiia</taxon>
        <taxon>Chlorobiales</taxon>
        <taxon>Chlorobiaceae</taxon>
        <taxon>Chlorobium/Pelodictyon group</taxon>
        <taxon>Pelodictyon</taxon>
    </lineage>
</organism>
<comment type="function">
    <text evidence="1">Tetrapolymerization of the monopyrrole PBG into the hydroxymethylbilane pre-uroporphyrinogen in several discrete steps.</text>
</comment>
<comment type="catalytic activity">
    <reaction evidence="1">
        <text>4 porphobilinogen + H2O = hydroxymethylbilane + 4 NH4(+)</text>
        <dbReference type="Rhea" id="RHEA:13185"/>
        <dbReference type="ChEBI" id="CHEBI:15377"/>
        <dbReference type="ChEBI" id="CHEBI:28938"/>
        <dbReference type="ChEBI" id="CHEBI:57845"/>
        <dbReference type="ChEBI" id="CHEBI:58126"/>
        <dbReference type="EC" id="2.5.1.61"/>
    </reaction>
</comment>
<comment type="cofactor">
    <cofactor evidence="1">
        <name>dipyrromethane</name>
        <dbReference type="ChEBI" id="CHEBI:60342"/>
    </cofactor>
    <text evidence="1">Binds 1 dipyrromethane group covalently.</text>
</comment>
<comment type="pathway">
    <text evidence="1">Porphyrin-containing compound metabolism; protoporphyrin-IX biosynthesis; coproporphyrinogen-III from 5-aminolevulinate: step 2/4.</text>
</comment>
<comment type="pathway">
    <text evidence="1">Porphyrin-containing compound metabolism; chlorophyll biosynthesis.</text>
</comment>
<comment type="subunit">
    <text evidence="1">Monomer.</text>
</comment>
<comment type="miscellaneous">
    <text evidence="1">The porphobilinogen subunits are added to the dipyrromethane group.</text>
</comment>
<comment type="similarity">
    <text evidence="1">Belongs to the HMBS family.</text>
</comment>
<dbReference type="EC" id="2.5.1.61" evidence="1"/>
<dbReference type="EMBL" id="CP000096">
    <property type="protein sequence ID" value="ABB24286.1"/>
    <property type="molecule type" value="Genomic_DNA"/>
</dbReference>
<dbReference type="RefSeq" id="WP_011358158.1">
    <property type="nucleotide sequence ID" value="NC_007512.1"/>
</dbReference>
<dbReference type="SMR" id="Q3B2Z5"/>
<dbReference type="STRING" id="319225.Plut_1427"/>
<dbReference type="KEGG" id="plt:Plut_1427"/>
<dbReference type="eggNOG" id="COG0181">
    <property type="taxonomic scope" value="Bacteria"/>
</dbReference>
<dbReference type="HOGENOM" id="CLU_019704_0_2_10"/>
<dbReference type="OrthoDB" id="9810298at2"/>
<dbReference type="UniPathway" id="UPA00251">
    <property type="reaction ID" value="UER00319"/>
</dbReference>
<dbReference type="UniPathway" id="UPA00668"/>
<dbReference type="Proteomes" id="UP000002709">
    <property type="component" value="Chromosome"/>
</dbReference>
<dbReference type="GO" id="GO:0005737">
    <property type="term" value="C:cytoplasm"/>
    <property type="evidence" value="ECO:0007669"/>
    <property type="project" value="TreeGrafter"/>
</dbReference>
<dbReference type="GO" id="GO:0004418">
    <property type="term" value="F:hydroxymethylbilane synthase activity"/>
    <property type="evidence" value="ECO:0007669"/>
    <property type="project" value="UniProtKB-UniRule"/>
</dbReference>
<dbReference type="GO" id="GO:0015995">
    <property type="term" value="P:chlorophyll biosynthetic process"/>
    <property type="evidence" value="ECO:0007669"/>
    <property type="project" value="UniProtKB-UniRule"/>
</dbReference>
<dbReference type="GO" id="GO:0006782">
    <property type="term" value="P:protoporphyrinogen IX biosynthetic process"/>
    <property type="evidence" value="ECO:0007669"/>
    <property type="project" value="UniProtKB-UniRule"/>
</dbReference>
<dbReference type="CDD" id="cd13646">
    <property type="entry name" value="PBP2_EcHMBS_like"/>
    <property type="match status" value="1"/>
</dbReference>
<dbReference type="FunFam" id="3.30.160.40:FF:000002">
    <property type="entry name" value="Porphobilinogen deaminase"/>
    <property type="match status" value="1"/>
</dbReference>
<dbReference type="FunFam" id="3.40.190.10:FF:000004">
    <property type="entry name" value="Porphobilinogen deaminase"/>
    <property type="match status" value="1"/>
</dbReference>
<dbReference type="FunFam" id="3.40.190.10:FF:000005">
    <property type="entry name" value="Porphobilinogen deaminase"/>
    <property type="match status" value="1"/>
</dbReference>
<dbReference type="Gene3D" id="3.40.190.10">
    <property type="entry name" value="Periplasmic binding protein-like II"/>
    <property type="match status" value="2"/>
</dbReference>
<dbReference type="Gene3D" id="3.30.160.40">
    <property type="entry name" value="Porphobilinogen deaminase, C-terminal domain"/>
    <property type="match status" value="1"/>
</dbReference>
<dbReference type="HAMAP" id="MF_00260">
    <property type="entry name" value="Porphobil_deam"/>
    <property type="match status" value="1"/>
</dbReference>
<dbReference type="InterPro" id="IPR000860">
    <property type="entry name" value="HemC"/>
</dbReference>
<dbReference type="InterPro" id="IPR022419">
    <property type="entry name" value="Porphobilin_deaminase_cofac_BS"/>
</dbReference>
<dbReference type="InterPro" id="IPR022417">
    <property type="entry name" value="Porphobilin_deaminase_N"/>
</dbReference>
<dbReference type="InterPro" id="IPR022418">
    <property type="entry name" value="Porphobilinogen_deaminase_C"/>
</dbReference>
<dbReference type="InterPro" id="IPR036803">
    <property type="entry name" value="Porphobilinogen_deaminase_C_sf"/>
</dbReference>
<dbReference type="NCBIfam" id="TIGR00212">
    <property type="entry name" value="hemC"/>
    <property type="match status" value="1"/>
</dbReference>
<dbReference type="PANTHER" id="PTHR11557">
    <property type="entry name" value="PORPHOBILINOGEN DEAMINASE"/>
    <property type="match status" value="1"/>
</dbReference>
<dbReference type="PANTHER" id="PTHR11557:SF0">
    <property type="entry name" value="PORPHOBILINOGEN DEAMINASE"/>
    <property type="match status" value="1"/>
</dbReference>
<dbReference type="Pfam" id="PF01379">
    <property type="entry name" value="Porphobil_deam"/>
    <property type="match status" value="1"/>
</dbReference>
<dbReference type="Pfam" id="PF03900">
    <property type="entry name" value="Porphobil_deamC"/>
    <property type="match status" value="1"/>
</dbReference>
<dbReference type="PIRSF" id="PIRSF001438">
    <property type="entry name" value="4pyrrol_synth_OHMeBilane_synth"/>
    <property type="match status" value="1"/>
</dbReference>
<dbReference type="PRINTS" id="PR00151">
    <property type="entry name" value="PORPHBDMNASE"/>
</dbReference>
<dbReference type="SUPFAM" id="SSF53850">
    <property type="entry name" value="Periplasmic binding protein-like II"/>
    <property type="match status" value="1"/>
</dbReference>
<dbReference type="SUPFAM" id="SSF54782">
    <property type="entry name" value="Porphobilinogen deaminase (hydroxymethylbilane synthase), C-terminal domain"/>
    <property type="match status" value="1"/>
</dbReference>
<dbReference type="PROSITE" id="PS00533">
    <property type="entry name" value="PORPHOBILINOGEN_DEAM"/>
    <property type="match status" value="1"/>
</dbReference>
<gene>
    <name evidence="1" type="primary">hemC</name>
    <name type="ordered locus">Plut_1427</name>
</gene>
<keyword id="KW-0149">Chlorophyll biosynthesis</keyword>
<keyword id="KW-0627">Porphyrin biosynthesis</keyword>
<keyword id="KW-1185">Reference proteome</keyword>
<keyword id="KW-0808">Transferase</keyword>
<evidence type="ECO:0000255" key="1">
    <source>
        <dbReference type="HAMAP-Rule" id="MF_00260"/>
    </source>
</evidence>
<feature type="chain" id="PRO_0000304257" description="Porphobilinogen deaminase">
    <location>
        <begin position="1"/>
        <end position="313"/>
    </location>
</feature>
<feature type="modified residue" description="S-(dipyrrolylmethanemethyl)cysteine" evidence="1">
    <location>
        <position position="241"/>
    </location>
</feature>
<sequence length="313" mass="34607">MKKQLIIGTRSSPLALWQAEFTKAELSRHFPDLEITLKLVKTTGDVLLDSPLSKIGDMGLFTKDIEKFLIAKEIDLAVHSLKDVPTATPEGLIISAFTEREDTRDVIISKTGAKLLDLPKNAKVATSSLRRMSQLKSLRPDFEICDIRGNLNTRFKKFDEGEFDAMMLAYAGVYRLNFSDRISEILPHEIMLPAVGQGALGIETRVDDEQTREIVKVMNHSTTEYCCKAERALLRHLQGGCQIPIGAYASFKNGTLHLLAFVGSTDGTIGIRDEITKTGLTSPSQAEEAGIELAKELLKQGAEKILSEIRKSC</sequence>
<protein>
    <recommendedName>
        <fullName evidence="1">Porphobilinogen deaminase</fullName>
        <shortName evidence="1">PBG</shortName>
        <ecNumber evidence="1">2.5.1.61</ecNumber>
    </recommendedName>
    <alternativeName>
        <fullName evidence="1">Hydroxymethylbilane synthase</fullName>
        <shortName evidence="1">HMBS</shortName>
    </alternativeName>
    <alternativeName>
        <fullName evidence="1">Pre-uroporphyrinogen synthase</fullName>
    </alternativeName>
</protein>
<proteinExistence type="inferred from homology"/>
<accession>Q3B2Z5</accession>